<accession>P80586</accession>
<protein>
    <recommendedName>
        <fullName>Light-harvesting polypeptide B-800/860 alpha chain</fullName>
    </recommendedName>
    <alternativeName>
        <fullName>Antenna pigment polypeptide alpha chain</fullName>
    </alternativeName>
    <alternativeName>
        <fullName>LH-2</fullName>
    </alternativeName>
</protein>
<reference key="1">
    <citation type="journal article" date="1996" name="Eur. J. Biochem.">
        <title>The antenna complexes of the purple non-sulfur photosynthetic bacterium Rhodocyclus tenuis. Structural and spectral characterization.</title>
        <authorList>
            <person name="Hu Q."/>
            <person name="Brunisholz R.A."/>
            <person name="Frank G."/>
            <person name="Zuber H."/>
        </authorList>
    </citation>
    <scope>PROTEIN SEQUENCE</scope>
    <source>
        <strain>ATCC 25093 / DSM 109 / 2761</strain>
    </source>
</reference>
<evidence type="ECO:0000255" key="1"/>
<evidence type="ECO:0000305" key="2"/>
<proteinExistence type="evidence at protein level"/>
<comment type="function">
    <text>Antenna complexes are light-harvesting systems, which transfer the excitation energy to the reaction centers.</text>
</comment>
<comment type="subunit">
    <text>The core complex is formed by different alpha and beta chains, binding bacteriochlorophyll molecules, and arranged most probably in tetrameric structures disposed around the reaction center. The non-pigmented gamma chains may constitute additional components.</text>
</comment>
<comment type="subcellular location">
    <subcellularLocation>
        <location>Cell inner membrane</location>
        <topology>Single-pass type II membrane protein</topology>
    </subcellularLocation>
</comment>
<comment type="similarity">
    <text evidence="2">Belongs to the antenna complex alpha subunit family.</text>
</comment>
<keyword id="KW-0042">Antenna complex</keyword>
<keyword id="KW-0076">Bacteriochlorophyll</keyword>
<keyword id="KW-0997">Cell inner membrane</keyword>
<keyword id="KW-1003">Cell membrane</keyword>
<keyword id="KW-0148">Chlorophyll</keyword>
<keyword id="KW-0157">Chromophore</keyword>
<keyword id="KW-0903">Direct protein sequencing</keyword>
<keyword id="KW-0437">Light-harvesting polypeptide</keyword>
<keyword id="KW-0460">Magnesium</keyword>
<keyword id="KW-0472">Membrane</keyword>
<keyword id="KW-0479">Metal-binding</keyword>
<keyword id="KW-0812">Transmembrane</keyword>
<keyword id="KW-1133">Transmembrane helix</keyword>
<name>LHA_RHOTE</name>
<organism>
    <name type="scientific">Rhodocyclus tenuis</name>
    <name type="common">Rhodospirillum tenue</name>
    <dbReference type="NCBI Taxonomy" id="1066"/>
    <lineage>
        <taxon>Bacteria</taxon>
        <taxon>Pseudomonadati</taxon>
        <taxon>Pseudomonadota</taxon>
        <taxon>Betaproteobacteria</taxon>
        <taxon>Rhodocyclales</taxon>
        <taxon>Rhodocyclaceae</taxon>
        <taxon>Rhodocyclus</taxon>
    </lineage>
</organism>
<dbReference type="PIR" id="S68881">
    <property type="entry name" value="S68881"/>
</dbReference>
<dbReference type="RefSeq" id="WP_153115734.1">
    <property type="nucleotide sequence ID" value="NZ_JACIGE010000002.1"/>
</dbReference>
<dbReference type="SMR" id="P80586"/>
<dbReference type="OrthoDB" id="9156281at2"/>
<dbReference type="GO" id="GO:0005886">
    <property type="term" value="C:plasma membrane"/>
    <property type="evidence" value="ECO:0007669"/>
    <property type="project" value="UniProtKB-SubCell"/>
</dbReference>
<dbReference type="GO" id="GO:0030077">
    <property type="term" value="C:plasma membrane light-harvesting complex"/>
    <property type="evidence" value="ECO:0007669"/>
    <property type="project" value="InterPro"/>
</dbReference>
<dbReference type="GO" id="GO:0042314">
    <property type="term" value="F:bacteriochlorophyll binding"/>
    <property type="evidence" value="ECO:0007669"/>
    <property type="project" value="UniProtKB-KW"/>
</dbReference>
<dbReference type="GO" id="GO:0045156">
    <property type="term" value="F:electron transporter, transferring electrons within the cyclic electron transport pathway of photosynthesis activity"/>
    <property type="evidence" value="ECO:0007669"/>
    <property type="project" value="InterPro"/>
</dbReference>
<dbReference type="GO" id="GO:0046872">
    <property type="term" value="F:metal ion binding"/>
    <property type="evidence" value="ECO:0007669"/>
    <property type="project" value="UniProtKB-KW"/>
</dbReference>
<dbReference type="GO" id="GO:0019684">
    <property type="term" value="P:photosynthesis, light reaction"/>
    <property type="evidence" value="ECO:0007669"/>
    <property type="project" value="InterPro"/>
</dbReference>
<dbReference type="Gene3D" id="4.10.220.20">
    <property type="entry name" value="Light-harvesting complex"/>
    <property type="match status" value="1"/>
</dbReference>
<dbReference type="InterPro" id="IPR000066">
    <property type="entry name" value="Antenna_a/b"/>
</dbReference>
<dbReference type="InterPro" id="IPR035889">
    <property type="entry name" value="Light-harvesting_complex"/>
</dbReference>
<dbReference type="Pfam" id="PF00556">
    <property type="entry name" value="LHC"/>
    <property type="match status" value="1"/>
</dbReference>
<dbReference type="SUPFAM" id="SSF56918">
    <property type="entry name" value="Light-harvesting complex subunits"/>
    <property type="match status" value="1"/>
</dbReference>
<sequence>MTNGKIWLVVKPTVGLPIGMLFAALLAVLIHGLLFVDGRLKSWWSEFPVAKPAVVSVQAAPAPVAAEVK</sequence>
<feature type="chain" id="PRO_0000099806" description="Light-harvesting polypeptide B-800/860 alpha chain">
    <location>
        <begin position="1"/>
        <end position="69"/>
    </location>
</feature>
<feature type="topological domain" description="Cytoplasmic" evidence="1">
    <location>
        <begin position="1"/>
        <end position="14"/>
    </location>
</feature>
<feature type="transmembrane region" description="Helical" evidence="1">
    <location>
        <begin position="15"/>
        <end position="35"/>
    </location>
</feature>
<feature type="topological domain" description="Periplasmic" evidence="1">
    <location>
        <begin position="36"/>
        <end position="69"/>
    </location>
</feature>
<feature type="binding site" description="axial binding residue" evidence="1">
    <location>
        <position position="31"/>
    </location>
    <ligand>
        <name>a bacteriochlorophyll</name>
        <dbReference type="ChEBI" id="CHEBI:38201"/>
    </ligand>
    <ligandPart>
        <name>Mg</name>
        <dbReference type="ChEBI" id="CHEBI:25107"/>
    </ligandPart>
</feature>